<organism>
    <name type="scientific">Human cytomegalovirus (strain AD169)</name>
    <name type="common">HHV-5</name>
    <name type="synonym">Human herpesvirus 5</name>
    <dbReference type="NCBI Taxonomy" id="10360"/>
    <lineage>
        <taxon>Viruses</taxon>
        <taxon>Duplodnaviria</taxon>
        <taxon>Heunggongvirae</taxon>
        <taxon>Peploviricota</taxon>
        <taxon>Herviviricetes</taxon>
        <taxon>Herpesvirales</taxon>
        <taxon>Orthoherpesviridae</taxon>
        <taxon>Betaherpesvirinae</taxon>
        <taxon>Cytomegalovirus</taxon>
        <taxon>Cytomegalovirus humanbeta5</taxon>
        <taxon>Human cytomegalovirus</taxon>
    </lineage>
</organism>
<sequence>MDTIIHNSTRNNTPPHINDTCNMTGPLFAIRTTEAVLNTFIIFVGGPLNAIVLITQLLTNRVLGYSTPTIYMTNLYSTNFLTLTVLPFIVLSNQWLLPAGVASCKFLSVIYYSSCTVGFATVALIAADRYRVLHKRTYARQSYRSTYMILLLTWLAGLIFSVPAAVYTTVVMHHDANDTNNTNGHATCVLYFVAEEVHTVLLSWKVLLTMVWGAAPVIMMTWFYAFFYSTVQRTSQKQRSRTLTFVSVLLISFVALQTPYVSLMIFNSYATTAWPMQCEHLTLRRTIGTLARVVPHLHCLINPILYALLGHDFLQRMRQCFRGQLLDRRAFLRSQQNQRATAETNLAAGNNSQSVATSLDTNSKNYNQHAKRSVSFNFPSGTWKGGQKTASNDTSTKIPHRLSQSHHNLSGV</sequence>
<name>UL33_HCMVA</name>
<evidence type="ECO:0000250" key="1">
    <source>
        <dbReference type="UniProtKB" id="Q6SW98"/>
    </source>
</evidence>
<evidence type="ECO:0000255" key="2"/>
<evidence type="ECO:0000255" key="3">
    <source>
        <dbReference type="PROSITE-ProRule" id="PRU00521"/>
    </source>
</evidence>
<evidence type="ECO:0000256" key="4">
    <source>
        <dbReference type="SAM" id="MobiDB-lite"/>
    </source>
</evidence>
<evidence type="ECO:0000269" key="5">
    <source>
    </source>
</evidence>
<evidence type="ECO:0000269" key="6">
    <source>
    </source>
</evidence>
<evidence type="ECO:0000269" key="7">
    <source>
    </source>
</evidence>
<evidence type="ECO:0000305" key="8"/>
<proteinExistence type="evidence at protein level"/>
<reference key="1">
    <citation type="journal article" date="1990" name="Curr. Top. Microbiol. Immunol.">
        <title>Analysis of the protein-coding content of the sequence of human cytomegalovirus strain AD169.</title>
        <authorList>
            <person name="Chee M.S."/>
            <person name="Bankier A.T."/>
            <person name="Beck S."/>
            <person name="Bohni R."/>
            <person name="Brown C.M."/>
            <person name="Cerny R."/>
            <person name="Horsnell T."/>
            <person name="Hutchison C.A. III"/>
            <person name="Kouzarides T."/>
            <person name="Martignetti J.A."/>
            <person name="Preddie E."/>
            <person name="Satchwell S.C."/>
            <person name="Tomlinson P."/>
            <person name="Weston K.M."/>
            <person name="Barrell B.G."/>
        </authorList>
    </citation>
    <scope>NUCLEOTIDE SEQUENCE [GENOMIC DNA]</scope>
</reference>
<reference key="2">
    <citation type="journal article" date="1990" name="Nature">
        <title>Human cytomegalovirus encodes three G protein-coupled receptor homologues.</title>
        <authorList>
            <person name="Chee M.S."/>
            <person name="Satchwell S.C."/>
            <person name="Preddie E."/>
            <person name="Weston K.M."/>
            <person name="Barrell B.G."/>
        </authorList>
    </citation>
    <scope>SIMILARITY TO G-PROTEIN COUPLED RECEPTORS</scope>
</reference>
<reference key="3">
    <citation type="journal article" date="2003" name="J. Gen. Virol.">
        <title>The human cytomegalovirus genome revisited: comparison with the chimpanzee cytomegalovirus genome.</title>
        <authorList>
            <person name="Davison A.J."/>
            <person name="Dolan A."/>
            <person name="Akter P."/>
            <person name="Addison C."/>
            <person name="Dargan D.J."/>
            <person name="Alcendor D.J."/>
            <person name="McGeoch D.J."/>
            <person name="Hayward G.S."/>
        </authorList>
    </citation>
    <scope>GENOME REANNOTATION</scope>
    <scope>SEQUENCE REVISION</scope>
</reference>
<reference key="4">
    <citation type="journal article" date="2003" name="J. Gen. Virol.">
        <authorList>
            <person name="Davison A.J."/>
            <person name="Dolan A."/>
            <person name="Akter P."/>
            <person name="Addison C."/>
            <person name="Dargan D.J."/>
            <person name="Alcendor D.J."/>
            <person name="McGeoch D.J."/>
            <person name="Hayward G.S."/>
        </authorList>
    </citation>
    <scope>ERRATUM OF PUBMED:12533697</scope>
</reference>
<reference key="5">
    <citation type="journal article" date="2002" name="Traffic">
        <title>Localization of HCMV UL33 and US27 in endocytic compartments and viral membranes.</title>
        <authorList>
            <person name="Fraile-Ramos A."/>
            <person name="Pelchen-Matthews A."/>
            <person name="Kledal T.N."/>
            <person name="Browne H."/>
            <person name="Schwartz T.W."/>
            <person name="Marsh M."/>
        </authorList>
    </citation>
    <scope>SUBCELLULAR LOCATION</scope>
</reference>
<reference key="6">
    <citation type="journal article" date="2003" name="J. Biol. Chem.">
        <title>Constitutive signaling of the human cytomegalovirus-encoded receptor UL33 differs from that of its rat cytomegalovirus homolog R33 by promiscuous activation of G proteins of the Gq, Gi, and Gs classes.</title>
        <authorList>
            <person name="Casarosa P."/>
            <person name="Gruijthuijsen Y.K."/>
            <person name="Michel D."/>
            <person name="Beisser P.S."/>
            <person name="Holl J."/>
            <person name="Fitzsimons C.P."/>
            <person name="Verzijl D."/>
            <person name="Bruggeman C.A."/>
            <person name="Mertens T."/>
            <person name="Leurs R."/>
            <person name="Vink C."/>
            <person name="Smit M.J."/>
        </authorList>
    </citation>
    <scope>FUNCTION</scope>
</reference>
<reference key="7">
    <citation type="journal article" date="2004" name="J. Virol.">
        <title>Identification of proteins in human cytomegalovirus (HCMV) particles: the HCMV proteome.</title>
        <authorList>
            <person name="Varnum S.M."/>
            <person name="Streblow D.N."/>
            <person name="Monroe M.E."/>
            <person name="Smith P."/>
            <person name="Auberry K.J."/>
            <person name="Pasa-Tolic L."/>
            <person name="Wang D."/>
            <person name="Camp D.G. II"/>
            <person name="Rodland K."/>
            <person name="Wiley S."/>
            <person name="Britt W."/>
            <person name="Shenk T."/>
            <person name="Smith R.D."/>
            <person name="Nelson J.A."/>
        </authorList>
    </citation>
    <scope>IDENTIFICATION</scope>
</reference>
<reference key="8">
    <citation type="journal article" date="2004" name="J. Virol.">
        <authorList>
            <person name="Varnum S.M."/>
            <person name="Streblow D.N."/>
            <person name="Monroe M.E."/>
            <person name="Smith P."/>
            <person name="Auberry K.J."/>
            <person name="Pasa-Tolic L."/>
            <person name="Wang D."/>
            <person name="Camp D.G. II"/>
            <person name="Rodland K."/>
            <person name="Wiley S."/>
            <person name="Britt W."/>
            <person name="Shenk T."/>
            <person name="Smith R.D."/>
            <person name="Nelson J.A."/>
        </authorList>
    </citation>
    <scope>ERRATUM OF PUBMED:15452216</scope>
</reference>
<reference key="9">
    <citation type="journal article" date="2004" name="Hum. Immunol.">
        <title>Consequences of human cytomegalovirus mimicry.</title>
        <authorList>
            <person name="Michelson S."/>
        </authorList>
    </citation>
    <scope>REVIEW</scope>
</reference>
<reference key="10">
    <citation type="journal article" date="2011" name="Biochem. Pharmacol.">
        <title>Heteromerization of human cytomegalovirus encoded chemokine receptors.</title>
        <authorList>
            <person name="Tschische P."/>
            <person name="Tadagaki K."/>
            <person name="Kamal M."/>
            <person name="Jockers R."/>
            <person name="Waldhoer M."/>
        </authorList>
    </citation>
    <scope>INTERACTION WITH US28</scope>
</reference>
<keyword id="KW-1015">Disulfide bond</keyword>
<keyword id="KW-0297">G-protein coupled receptor</keyword>
<keyword id="KW-0325">Glycoprotein</keyword>
<keyword id="KW-1032">Host cell membrane</keyword>
<keyword id="KW-1035">Host cytoplasm</keyword>
<keyword id="KW-1043">Host membrane</keyword>
<keyword id="KW-0945">Host-virus interaction</keyword>
<keyword id="KW-1086">Inhibition of host chemokines by virus</keyword>
<keyword id="KW-0472">Membrane</keyword>
<keyword id="KW-0675">Receptor</keyword>
<keyword id="KW-1185">Reference proteome</keyword>
<keyword id="KW-0807">Transducer</keyword>
<keyword id="KW-0812">Transmembrane</keyword>
<keyword id="KW-1133">Transmembrane helix</keyword>
<keyword id="KW-0899">Viral immunoevasion</keyword>
<keyword id="KW-0946">Virion</keyword>
<comment type="function">
    <text evidence="1 6">G-protein-coupled receptor (vGPCR) that constitutively activates multiple oncogenic signaling pathways including STAT3, AP-1, phospholipase C, NF-kappa-B or cAMP-responsive element (CRE) pathways (PubMed:14522997). Plays an important role in viral reactivation from latency through activation of host CREB1, facilitating its recruitment to the viral major immediate early (MIE) genes. In turn, expression of the MIE-driven genes such as UL123 are de-repressed. Also facilitates virus dissemination via the extracellular and cell-to-cell route (By similarity).</text>
</comment>
<comment type="subunit">
    <text evidence="7">Heterodimerizes with US28.</text>
</comment>
<comment type="subcellular location">
    <subcellularLocation>
        <location evidence="5">Virion</location>
    </subcellularLocation>
    <subcellularLocation>
        <location evidence="5">Host cell membrane</location>
        <topology evidence="5">Multi-pass membrane protein</topology>
    </subcellularLocation>
    <subcellularLocation>
        <location evidence="1">Host cytoplasm</location>
    </subcellularLocation>
    <text evidence="1">Present in the virion assembly compartment (VAC) of HCMV-infected cells.</text>
</comment>
<comment type="similarity">
    <text evidence="3">Belongs to the G-protein coupled receptor 1 family.</text>
</comment>
<comment type="sequence caution" evidence="8">
    <conflict type="frameshift">
        <sequence resource="EMBL-CDS" id="CAA35432"/>
    </conflict>
</comment>
<comment type="sequence caution" evidence="8">
    <conflict type="frameshift">
        <sequence resource="EMBL-CDS" id="CAA37385"/>
    </conflict>
</comment>
<gene>
    <name type="primary">UL33</name>
</gene>
<accession>P16849</accession>
<accession>Q7M6Q0</accession>
<organismHost>
    <name type="scientific">Homo sapiens</name>
    <name type="common">Human</name>
    <dbReference type="NCBI Taxonomy" id="9606"/>
</organismHost>
<dbReference type="EMBL" id="X17403">
    <property type="protein sequence ID" value="CAA35432.1"/>
    <property type="status" value="ALT_FRAME"/>
    <property type="molecule type" value="Genomic_DNA"/>
</dbReference>
<dbReference type="EMBL" id="X53293">
    <property type="protein sequence ID" value="CAA37385.1"/>
    <property type="status" value="ALT_FRAME"/>
    <property type="molecule type" value="Genomic_DNA"/>
</dbReference>
<dbReference type="EMBL" id="BK000394">
    <property type="protein sequence ID" value="DAA00138.1"/>
    <property type="molecule type" value="Genomic_DNA"/>
</dbReference>
<dbReference type="PIR" id="S09796">
    <property type="entry name" value="QQBET9"/>
</dbReference>
<dbReference type="SMR" id="P16849"/>
<dbReference type="GlyCosmos" id="P16849">
    <property type="glycosylation" value="5 sites, No reported glycans"/>
</dbReference>
<dbReference type="Proteomes" id="UP000008991">
    <property type="component" value="Segment"/>
</dbReference>
<dbReference type="Proteomes" id="UP000008992">
    <property type="component" value="Segment"/>
</dbReference>
<dbReference type="GO" id="GO:0030430">
    <property type="term" value="C:host cell cytoplasm"/>
    <property type="evidence" value="ECO:0007669"/>
    <property type="project" value="UniProtKB-SubCell"/>
</dbReference>
<dbReference type="GO" id="GO:0020002">
    <property type="term" value="C:host cell plasma membrane"/>
    <property type="evidence" value="ECO:0007669"/>
    <property type="project" value="UniProtKB-SubCell"/>
</dbReference>
<dbReference type="GO" id="GO:0016020">
    <property type="term" value="C:membrane"/>
    <property type="evidence" value="ECO:0007669"/>
    <property type="project" value="UniProtKB-KW"/>
</dbReference>
<dbReference type="GO" id="GO:0044423">
    <property type="term" value="C:virion component"/>
    <property type="evidence" value="ECO:0007669"/>
    <property type="project" value="UniProtKB-KW"/>
</dbReference>
<dbReference type="GO" id="GO:0004930">
    <property type="term" value="F:G protein-coupled receptor activity"/>
    <property type="evidence" value="ECO:0007669"/>
    <property type="project" value="UniProtKB-KW"/>
</dbReference>
<dbReference type="CDD" id="cd00637">
    <property type="entry name" value="7tm_classA_rhodopsin-like"/>
    <property type="match status" value="1"/>
</dbReference>
<dbReference type="Gene3D" id="1.20.1070.10">
    <property type="entry name" value="Rhodopsin 7-helix transmembrane proteins"/>
    <property type="match status" value="1"/>
</dbReference>
<dbReference type="InterPro" id="IPR050119">
    <property type="entry name" value="CCR1-9-like"/>
</dbReference>
<dbReference type="InterPro" id="IPR000276">
    <property type="entry name" value="GPCR_Rhodpsn"/>
</dbReference>
<dbReference type="InterPro" id="IPR017452">
    <property type="entry name" value="GPCR_Rhodpsn_7TM"/>
</dbReference>
<dbReference type="PANTHER" id="PTHR10489">
    <property type="entry name" value="CELL ADHESION MOLECULE"/>
    <property type="match status" value="1"/>
</dbReference>
<dbReference type="PANTHER" id="PTHR10489:SF932">
    <property type="entry name" value="G-PROTEIN COUPLED RECEPTORS FAMILY 1 PROFILE DOMAIN-CONTAINING PROTEIN"/>
    <property type="match status" value="1"/>
</dbReference>
<dbReference type="Pfam" id="PF00001">
    <property type="entry name" value="7tm_1"/>
    <property type="match status" value="1"/>
</dbReference>
<dbReference type="PRINTS" id="PR00237">
    <property type="entry name" value="GPCRRHODOPSN"/>
</dbReference>
<dbReference type="SUPFAM" id="SSF81321">
    <property type="entry name" value="Family A G protein-coupled receptor-like"/>
    <property type="match status" value="1"/>
</dbReference>
<dbReference type="PROSITE" id="PS00237">
    <property type="entry name" value="G_PROTEIN_RECEP_F1_1"/>
    <property type="match status" value="1"/>
</dbReference>
<dbReference type="PROSITE" id="PS50262">
    <property type="entry name" value="G_PROTEIN_RECEP_F1_2"/>
    <property type="match status" value="1"/>
</dbReference>
<feature type="chain" id="PRO_0000070240" description="G-protein coupled receptor homolog UL33">
    <location>
        <begin position="1"/>
        <end position="412"/>
    </location>
</feature>
<feature type="topological domain" description="Virion surface" evidence="2">
    <location>
        <begin position="1"/>
        <end position="29"/>
    </location>
</feature>
<feature type="transmembrane region" description="Helical; Name=1" evidence="2">
    <location>
        <begin position="30"/>
        <end position="54"/>
    </location>
</feature>
<feature type="topological domain" description="Intravirion" evidence="2">
    <location>
        <begin position="55"/>
        <end position="70"/>
    </location>
</feature>
<feature type="transmembrane region" description="Helical; Name=2" evidence="2">
    <location>
        <begin position="71"/>
        <end position="95"/>
    </location>
</feature>
<feature type="topological domain" description="Virion surface" evidence="2">
    <location>
        <begin position="96"/>
        <end position="102"/>
    </location>
</feature>
<feature type="transmembrane region" description="Helical; Name=3" evidence="2">
    <location>
        <begin position="103"/>
        <end position="129"/>
    </location>
</feature>
<feature type="topological domain" description="Intravirion" evidence="2">
    <location>
        <begin position="130"/>
        <end position="138"/>
    </location>
</feature>
<feature type="transmembrane region" description="Helical; Name=4" evidence="2">
    <location>
        <begin position="139"/>
        <end position="160"/>
    </location>
</feature>
<feature type="topological domain" description="Virion surface" evidence="2">
    <location>
        <begin position="161"/>
        <end position="203"/>
    </location>
</feature>
<feature type="transmembrane region" description="Helical; Name=5" evidence="2">
    <location>
        <begin position="204"/>
        <end position="224"/>
    </location>
</feature>
<feature type="topological domain" description="Intravirion" evidence="2">
    <location>
        <begin position="225"/>
        <end position="240"/>
    </location>
</feature>
<feature type="transmembrane region" description="Helical; Name=6" evidence="2">
    <location>
        <begin position="241"/>
        <end position="267"/>
    </location>
</feature>
<feature type="topological domain" description="Virion surface" evidence="2">
    <location>
        <begin position="268"/>
        <end position="281"/>
    </location>
</feature>
<feature type="transmembrane region" description="Helical; Name=7" evidence="2">
    <location>
        <begin position="282"/>
        <end position="305"/>
    </location>
</feature>
<feature type="topological domain" description="Intravirion" evidence="2">
    <location>
        <begin position="306"/>
        <end position="412"/>
    </location>
</feature>
<feature type="region of interest" description="Disordered" evidence="4">
    <location>
        <begin position="377"/>
        <end position="412"/>
    </location>
</feature>
<feature type="compositionally biased region" description="Polar residues" evidence="4">
    <location>
        <begin position="388"/>
        <end position="397"/>
    </location>
</feature>
<feature type="glycosylation site" description="N-linked (GlcNAc...) asparagine; by host" evidence="2">
    <location>
        <position position="7"/>
    </location>
</feature>
<feature type="glycosylation site" description="N-linked (GlcNAc...) asparagine; by host" evidence="2">
    <location>
        <position position="18"/>
    </location>
</feature>
<feature type="glycosylation site" description="N-linked (GlcNAc...) asparagine; by host" evidence="2">
    <location>
        <position position="22"/>
    </location>
</feature>
<feature type="glycosylation site" description="N-linked (GlcNAc...) asparagine; by host" evidence="2">
    <location>
        <position position="177"/>
    </location>
</feature>
<feature type="glycosylation site" description="N-linked (GlcNAc...) asparagine; by host" evidence="2">
    <location>
        <position position="180"/>
    </location>
</feature>
<feature type="disulfide bond" evidence="3">
    <location>
        <begin position="104"/>
        <end position="188"/>
    </location>
</feature>
<protein>
    <recommendedName>
        <fullName>G-protein coupled receptor homolog UL33</fullName>
        <shortName>vGPCR UL33</shortName>
    </recommendedName>
</protein>